<dbReference type="EMBL" id="AK029896">
    <property type="protein sequence ID" value="BAC26663.1"/>
    <property type="molecule type" value="mRNA"/>
</dbReference>
<dbReference type="EMBL" id="AK083971">
    <property type="protein sequence ID" value="BAC39081.1"/>
    <property type="molecule type" value="mRNA"/>
</dbReference>
<dbReference type="EMBL" id="AC110376">
    <property type="status" value="NOT_ANNOTATED_CDS"/>
    <property type="molecule type" value="Genomic_DNA"/>
</dbReference>
<dbReference type="EMBL" id="BC056925">
    <property type="protein sequence ID" value="AAH56925.1"/>
    <property type="molecule type" value="mRNA"/>
</dbReference>
<dbReference type="CCDS" id="CCDS25807.1">
    <molecule id="Q8BND3-1"/>
</dbReference>
<dbReference type="CCDS" id="CCDS49027.1">
    <molecule id="Q8BND3-2"/>
</dbReference>
<dbReference type="RefSeq" id="NP_001152999.1">
    <molecule id="Q8BND3-2"/>
    <property type="nucleotide sequence ID" value="NM_001159527.1"/>
</dbReference>
<dbReference type="RefSeq" id="NP_766058.3">
    <molecule id="Q8BND3-1"/>
    <property type="nucleotide sequence ID" value="NM_172470.3"/>
</dbReference>
<dbReference type="SMR" id="Q8BND3"/>
<dbReference type="BioGRID" id="216937">
    <property type="interactions" value="3"/>
</dbReference>
<dbReference type="ComplexPortal" id="CPX-5027">
    <property type="entry name" value="Intraflagellar transport complex A"/>
</dbReference>
<dbReference type="FunCoup" id="Q8BND3">
    <property type="interactions" value="720"/>
</dbReference>
<dbReference type="IntAct" id="Q8BND3">
    <property type="interactions" value="1"/>
</dbReference>
<dbReference type="MINT" id="Q8BND3"/>
<dbReference type="STRING" id="10090.ENSMUSP00000082895"/>
<dbReference type="iPTMnet" id="Q8BND3"/>
<dbReference type="PhosphoSitePlus" id="Q8BND3"/>
<dbReference type="SwissPalm" id="Q8BND3"/>
<dbReference type="PaxDb" id="10090-ENSMUSP00000082895"/>
<dbReference type="PeptideAtlas" id="Q8BND3"/>
<dbReference type="ProteomicsDB" id="297644">
    <molecule id="Q8BND3-1"/>
</dbReference>
<dbReference type="ProteomicsDB" id="297645">
    <molecule id="Q8BND3-2"/>
</dbReference>
<dbReference type="Pumba" id="Q8BND3"/>
<dbReference type="Antibodypedia" id="50378">
    <property type="antibodies" value="60 antibodies from 22 providers"/>
</dbReference>
<dbReference type="DNASU" id="74682"/>
<dbReference type="Ensembl" id="ENSMUST00000085745.13">
    <molecule id="Q8BND3-1"/>
    <property type="protein sequence ID" value="ENSMUSP00000082895.7"/>
    <property type="gene ID" value="ENSMUSG00000066643.13"/>
</dbReference>
<dbReference type="Ensembl" id="ENSMUST00000111113.3">
    <molecule id="Q8BND3-2"/>
    <property type="protein sequence ID" value="ENSMUSP00000106742.3"/>
    <property type="gene ID" value="ENSMUSG00000066643.13"/>
</dbReference>
<dbReference type="GeneID" id="74682"/>
<dbReference type="KEGG" id="mmu:74682"/>
<dbReference type="UCSC" id="uc007naj.2">
    <molecule id="Q8BND3-1"/>
    <property type="organism name" value="mouse"/>
</dbReference>
<dbReference type="UCSC" id="uc007nak.2">
    <molecule id="Q8BND3-2"/>
    <property type="organism name" value="mouse"/>
</dbReference>
<dbReference type="AGR" id="MGI:1921932"/>
<dbReference type="CTD" id="57539"/>
<dbReference type="MGI" id="MGI:1921932">
    <property type="gene designation" value="Wdr35"/>
</dbReference>
<dbReference type="VEuPathDB" id="HostDB:ENSMUSG00000066643"/>
<dbReference type="eggNOG" id="KOG2041">
    <property type="taxonomic scope" value="Eukaryota"/>
</dbReference>
<dbReference type="GeneTree" id="ENSGT00940000155745"/>
<dbReference type="HOGENOM" id="CLU_004048_1_0_1"/>
<dbReference type="InParanoid" id="Q8BND3"/>
<dbReference type="OMA" id="VWAMCWA"/>
<dbReference type="OrthoDB" id="10260567at2759"/>
<dbReference type="PhylomeDB" id="Q8BND3"/>
<dbReference type="TreeFam" id="TF314076"/>
<dbReference type="Reactome" id="R-MMU-5610787">
    <property type="pathway name" value="Hedgehog 'off' state"/>
</dbReference>
<dbReference type="Reactome" id="R-MMU-5620924">
    <property type="pathway name" value="Intraflagellar transport"/>
</dbReference>
<dbReference type="BioGRID-ORCS" id="74682">
    <property type="hits" value="2 hits in 75 CRISPR screens"/>
</dbReference>
<dbReference type="ChiTaRS" id="Wdr35">
    <property type="organism name" value="mouse"/>
</dbReference>
<dbReference type="PRO" id="PR:Q8BND3"/>
<dbReference type="Proteomes" id="UP000000589">
    <property type="component" value="Chromosome 12"/>
</dbReference>
<dbReference type="RNAct" id="Q8BND3">
    <property type="molecule type" value="protein"/>
</dbReference>
<dbReference type="Bgee" id="ENSMUSG00000066643">
    <property type="expression patterns" value="Expressed in spermatocyte and 212 other cell types or tissues"/>
</dbReference>
<dbReference type="ExpressionAtlas" id="Q8BND3">
    <property type="expression patterns" value="baseline and differential"/>
</dbReference>
<dbReference type="GO" id="GO:0005930">
    <property type="term" value="C:axoneme"/>
    <property type="evidence" value="ECO:0000314"/>
    <property type="project" value="UniProtKB"/>
</dbReference>
<dbReference type="GO" id="GO:0005813">
    <property type="term" value="C:centrosome"/>
    <property type="evidence" value="ECO:0000314"/>
    <property type="project" value="UniProtKB"/>
</dbReference>
<dbReference type="GO" id="GO:0036064">
    <property type="term" value="C:ciliary basal body"/>
    <property type="evidence" value="ECO:0000314"/>
    <property type="project" value="UniProtKB"/>
</dbReference>
<dbReference type="GO" id="GO:0005929">
    <property type="term" value="C:cilium"/>
    <property type="evidence" value="ECO:0000303"/>
    <property type="project" value="ComplexPortal"/>
</dbReference>
<dbReference type="GO" id="GO:0030991">
    <property type="term" value="C:intraciliary transport particle A"/>
    <property type="evidence" value="ECO:0000314"/>
    <property type="project" value="MGI"/>
</dbReference>
<dbReference type="GO" id="GO:1990830">
    <property type="term" value="P:cellular response to leukemia inhibitory factor"/>
    <property type="evidence" value="ECO:0000270"/>
    <property type="project" value="MGI"/>
</dbReference>
<dbReference type="GO" id="GO:0060271">
    <property type="term" value="P:cilium assembly"/>
    <property type="evidence" value="ECO:0000315"/>
    <property type="project" value="UniProtKB"/>
</dbReference>
<dbReference type="GO" id="GO:0035721">
    <property type="term" value="P:intraciliary retrograde transport"/>
    <property type="evidence" value="ECO:0000266"/>
    <property type="project" value="MGI"/>
</dbReference>
<dbReference type="GO" id="GO:0061512">
    <property type="term" value="P:protein localization to cilium"/>
    <property type="evidence" value="ECO:0007669"/>
    <property type="project" value="Ensembl"/>
</dbReference>
<dbReference type="FunFam" id="1.25.40.470:FF:000004">
    <property type="entry name" value="WD repeat-containing protein 35"/>
    <property type="match status" value="1"/>
</dbReference>
<dbReference type="FunFam" id="2.130.10.10:FF:000187">
    <property type="entry name" value="WD repeat-containing protein 35"/>
    <property type="match status" value="1"/>
</dbReference>
<dbReference type="Gene3D" id="1.25.40.470">
    <property type="match status" value="1"/>
</dbReference>
<dbReference type="Gene3D" id="2.130.10.10">
    <property type="entry name" value="YVTN repeat-like/Quinoprotein amine dehydrogenase"/>
    <property type="match status" value="1"/>
</dbReference>
<dbReference type="InterPro" id="IPR056158">
    <property type="entry name" value="Beta-prop_WDR35_2nd"/>
</dbReference>
<dbReference type="InterPro" id="IPR056159">
    <property type="entry name" value="Beta-prop_WDR35_TULP_N"/>
</dbReference>
<dbReference type="InterPro" id="IPR039857">
    <property type="entry name" value="Ift122/121"/>
</dbReference>
<dbReference type="InterPro" id="IPR056157">
    <property type="entry name" value="TPR_IFT80_172_dom"/>
</dbReference>
<dbReference type="InterPro" id="IPR015943">
    <property type="entry name" value="WD40/YVTN_repeat-like_dom_sf"/>
</dbReference>
<dbReference type="InterPro" id="IPR036322">
    <property type="entry name" value="WD40_repeat_dom_sf"/>
</dbReference>
<dbReference type="InterPro" id="IPR001680">
    <property type="entry name" value="WD40_rpt"/>
</dbReference>
<dbReference type="InterPro" id="IPR017233">
    <property type="entry name" value="WDR35"/>
</dbReference>
<dbReference type="InterPro" id="IPR056170">
    <property type="entry name" value="Znf_IFT121-like"/>
</dbReference>
<dbReference type="PANTHER" id="PTHR12764:SF5">
    <property type="entry name" value="LD29485P"/>
    <property type="match status" value="1"/>
</dbReference>
<dbReference type="PANTHER" id="PTHR12764">
    <property type="entry name" value="WD REPEAT DOMAIN-RELATED"/>
    <property type="match status" value="1"/>
</dbReference>
<dbReference type="Pfam" id="PF23390">
    <property type="entry name" value="Beta-prop_WDR35_2nd"/>
    <property type="match status" value="1"/>
</dbReference>
<dbReference type="Pfam" id="PF24797">
    <property type="entry name" value="Beta-prop_WDR35_TULP_N"/>
    <property type="match status" value="1"/>
</dbReference>
<dbReference type="Pfam" id="PF23387">
    <property type="entry name" value="TPR_IFT80_172"/>
    <property type="match status" value="1"/>
</dbReference>
<dbReference type="Pfam" id="PF25170">
    <property type="entry name" value="TPR_WDR35"/>
    <property type="match status" value="1"/>
</dbReference>
<dbReference type="Pfam" id="PF23145">
    <property type="entry name" value="Zf_2nd_IFT121"/>
    <property type="match status" value="1"/>
</dbReference>
<dbReference type="PIRSF" id="PIRSF037536">
    <property type="entry name" value="WD_repeat_p35"/>
    <property type="match status" value="1"/>
</dbReference>
<dbReference type="SMART" id="SM00320">
    <property type="entry name" value="WD40"/>
    <property type="match status" value="4"/>
</dbReference>
<dbReference type="SUPFAM" id="SSF82171">
    <property type="entry name" value="DPP6 N-terminal domain-like"/>
    <property type="match status" value="1"/>
</dbReference>
<dbReference type="SUPFAM" id="SSF50978">
    <property type="entry name" value="WD40 repeat-like"/>
    <property type="match status" value="1"/>
</dbReference>
<dbReference type="PROSITE" id="PS50082">
    <property type="entry name" value="WD_REPEATS_2"/>
    <property type="match status" value="1"/>
</dbReference>
<dbReference type="PROSITE" id="PS50294">
    <property type="entry name" value="WD_REPEATS_REGION"/>
    <property type="match status" value="1"/>
</dbReference>
<organism>
    <name type="scientific">Mus musculus</name>
    <name type="common">Mouse</name>
    <dbReference type="NCBI Taxonomy" id="10090"/>
    <lineage>
        <taxon>Eukaryota</taxon>
        <taxon>Metazoa</taxon>
        <taxon>Chordata</taxon>
        <taxon>Craniata</taxon>
        <taxon>Vertebrata</taxon>
        <taxon>Euteleostomi</taxon>
        <taxon>Mammalia</taxon>
        <taxon>Eutheria</taxon>
        <taxon>Euarchontoglires</taxon>
        <taxon>Glires</taxon>
        <taxon>Rodentia</taxon>
        <taxon>Myomorpha</taxon>
        <taxon>Muroidea</taxon>
        <taxon>Muridae</taxon>
        <taxon>Murinae</taxon>
        <taxon>Mus</taxon>
        <taxon>Mus</taxon>
    </lineage>
</organism>
<feature type="chain" id="PRO_0000051385" description="WD repeat-containing protein 35">
    <location>
        <begin position="1"/>
        <end position="1181"/>
    </location>
</feature>
<feature type="repeat" description="WD 1">
    <location>
        <begin position="12"/>
        <end position="51"/>
    </location>
</feature>
<feature type="repeat" description="WD 2">
    <location>
        <begin position="69"/>
        <end position="108"/>
    </location>
</feature>
<feature type="repeat" description="WD 3">
    <location>
        <begin position="113"/>
        <end position="152"/>
    </location>
</feature>
<feature type="repeat" description="WD 4">
    <location>
        <begin position="154"/>
        <end position="193"/>
    </location>
</feature>
<feature type="repeat" description="WD 5">
    <location>
        <begin position="502"/>
        <end position="539"/>
    </location>
</feature>
<feature type="splice variant" id="VSP_009733" description="In isoform 2." evidence="4">
    <location>
        <begin position="399"/>
        <end position="409"/>
    </location>
</feature>
<feature type="sequence conflict" description="In Ref. 3; AAH56925." evidence="5" ref="3">
    <original>Y</original>
    <variation>H</variation>
    <location>
        <position position="634"/>
    </location>
</feature>
<feature type="sequence conflict" description="In Ref. 1; BAC39081." evidence="5" ref="1">
    <original>N</original>
    <variation>D</variation>
    <location>
        <position position="828"/>
    </location>
</feature>
<feature type="sequence conflict" description="In Ref. 1; BAC26663." evidence="5" ref="1">
    <original>S</original>
    <variation>Y</variation>
    <location>
        <position position="915"/>
    </location>
</feature>
<gene>
    <name evidence="6" type="primary">Wdr35</name>
</gene>
<protein>
    <recommendedName>
        <fullName evidence="5">WD repeat-containing protein 35</fullName>
    </recommendedName>
</protein>
<sequence length="1181" mass="133991">MFFYLSKKIAVPNNVKLKCISWNKDQGFIACGGEDGLLKVLRLETQTDDSKLRGLAAPSNLSMNQNLEGHSGAVQVVTWNEQYQKLTTSDQNGLIIVWMLYKGSWYEEMINNRNKSVVRSMSWNADGQKICIVYEDGAVIVGSVDGNRIWGKDLKGIQLCHVTWSADSKILLFGMANGEIHIYDNQGNFIMKMKLNCLVNVTGAISIAGIHWYHGTEGYVEPDCPCLAICFDNGRCQIMRHENDQNPVLIDTGMYVVGIQWNHIGSVLAVAGSQKVVTQDKDINIVQFYTPFGEHLGTLKVPGKQMCSLSWEGGGLKIALAVDSFIYFANIRPDYKWGYCSNTVVYAYTRPDRPEYCVVFWDTKNSEKYVKYVKSLISITTCGDFCILATKADENHPQEENEMETFGATFVLVLCNSIGTPLDPKYIDLVPLFVAMTKTHVIAASKEAFYTWQYRVAKKLTALEINQITRSRKEGRERIYHVDDVPSGSVDGVFDYSKAIQGTRDPICAITASDKTLIVGRESGVIQRYSFPNVALIQKYSLDCRACQLSLNCNSSRLAIIDIAGVLTFFDLDTRVTDSTGQQVVGELLKLERKDVWDMKWAKDNPDLFAMMEKTRMYVFRNLDPEEPIQTSGYICNFEDLEIKSVLLDEILKDPEHPSKDYIMNFEIRSLRDSRALIEKVGIEDASQFIEDNPHPRLWRLLAEAALQKLDLYTAQQAFVRCKDYQGIKFVKLLGNLQSESMKQAEVIAYFGRFEDAERMYQDMDRRDLAIGLRMKLGDWFRVLQLLKTGSGDADDSLLEQANNAIGEYFADRQKWQNAVQYYVKGRNQERLAECYYMLEDYEGLETLANSLPENHKLLPEIAQMFVRVGMCEQAVSAFLKCNQPKAAVDTCVHLNQWNKAVELAKSHSMKEIGSLLARYASHLLEKNKTLDAIELYRKASYFFDAAKLMYKIADEEAKKRTKPLRVKKLYVLSALLIEQYHEQMKNAQRGKVKGKNSEATSALAGLLEEEVLSTTSRFTDNAWRGAEAYHFFILAQRQLYEGYVDTALKTALHLRDYEDIIPSVEIYSLLALCACASRAFGTCSKAFIKLESLETLSAEQKQQYEDLALEIFTKHTPKDNRKSELNSLLEGGEGKLPTCIATGSPIIEYQFWVCKVCKHYVLAQEISNYNFCPLCHSSVE</sequence>
<accession>Q8BND3</accession>
<accession>E9QLW3</accession>
<accession>Q8CDL4</accession>
<comment type="function">
    <text evidence="1 2">As a component of the IFT complex A (IFT-A), a complex required for retrograde ciliary transport and entry into cilia of G protein-coupled receptors (GPCRs), it is involved in ciliogenesis and ciliary protein trafficking (PubMed:21473986). May promote CASP3 activation and TNF-stimulated apoptosis (By similarity).</text>
</comment>
<comment type="subunit">
    <text evidence="1 3">Component of the IFT complex A (IFT-A) complex. IFT-A complex is divided into a core subcomplex composed of IFT122:IFT140:WDR19 which is associated with TULP3 and a peripheral subcomplex composed of IFT43:WDR35:TTC21B. Interacts directy with IFT122, ITF43 and TTC21B. Interacts with IFT43. Interacts with CFAP61 (PubMed:34792097).</text>
</comment>
<comment type="subcellular location">
    <subcellularLocation>
        <location evidence="2">Cytoplasm</location>
        <location evidence="2">Cytoskeleton</location>
        <location evidence="2">Microtubule organizing center</location>
        <location evidence="2">Centrosome</location>
    </subcellularLocation>
    <subcellularLocation>
        <location evidence="2">Cytoplasm</location>
        <location evidence="2">Cytoskeleton</location>
        <location evidence="2">Cilium axoneme</location>
    </subcellularLocation>
    <subcellularLocation>
        <location evidence="2">Cytoplasm</location>
        <location evidence="2">Cytoskeleton</location>
        <location evidence="2">Cilium basal body</location>
    </subcellularLocation>
    <text>Immunofluorescence studies in IMCD3 cells show that Wdr35 accumulates at and around centrosomes and basal bodies of serum-starved cells, with fainter punctate staining along the cilia axoneme.</text>
</comment>
<comment type="alternative products">
    <event type="alternative splicing"/>
    <isoform>
        <id>Q8BND3-1</id>
        <name>1</name>
        <sequence type="displayed"/>
    </isoform>
    <isoform>
        <id>Q8BND3-2</id>
        <name>2</name>
        <sequence type="described" ref="VSP_009733"/>
    </isoform>
</comment>
<proteinExistence type="evidence at protein level"/>
<reference key="1">
    <citation type="journal article" date="2005" name="Science">
        <title>The transcriptional landscape of the mammalian genome.</title>
        <authorList>
            <person name="Carninci P."/>
            <person name="Kasukawa T."/>
            <person name="Katayama S."/>
            <person name="Gough J."/>
            <person name="Frith M.C."/>
            <person name="Maeda N."/>
            <person name="Oyama R."/>
            <person name="Ravasi T."/>
            <person name="Lenhard B."/>
            <person name="Wells C."/>
            <person name="Kodzius R."/>
            <person name="Shimokawa K."/>
            <person name="Bajic V.B."/>
            <person name="Brenner S.E."/>
            <person name="Batalov S."/>
            <person name="Forrest A.R."/>
            <person name="Zavolan M."/>
            <person name="Davis M.J."/>
            <person name="Wilming L.G."/>
            <person name="Aidinis V."/>
            <person name="Allen J.E."/>
            <person name="Ambesi-Impiombato A."/>
            <person name="Apweiler R."/>
            <person name="Aturaliya R.N."/>
            <person name="Bailey T.L."/>
            <person name="Bansal M."/>
            <person name="Baxter L."/>
            <person name="Beisel K.W."/>
            <person name="Bersano T."/>
            <person name="Bono H."/>
            <person name="Chalk A.M."/>
            <person name="Chiu K.P."/>
            <person name="Choudhary V."/>
            <person name="Christoffels A."/>
            <person name="Clutterbuck D.R."/>
            <person name="Crowe M.L."/>
            <person name="Dalla E."/>
            <person name="Dalrymple B.P."/>
            <person name="de Bono B."/>
            <person name="Della Gatta G."/>
            <person name="di Bernardo D."/>
            <person name="Down T."/>
            <person name="Engstrom P."/>
            <person name="Fagiolini M."/>
            <person name="Faulkner G."/>
            <person name="Fletcher C.F."/>
            <person name="Fukushima T."/>
            <person name="Furuno M."/>
            <person name="Futaki S."/>
            <person name="Gariboldi M."/>
            <person name="Georgii-Hemming P."/>
            <person name="Gingeras T.R."/>
            <person name="Gojobori T."/>
            <person name="Green R.E."/>
            <person name="Gustincich S."/>
            <person name="Harbers M."/>
            <person name="Hayashi Y."/>
            <person name="Hensch T.K."/>
            <person name="Hirokawa N."/>
            <person name="Hill D."/>
            <person name="Huminiecki L."/>
            <person name="Iacono M."/>
            <person name="Ikeo K."/>
            <person name="Iwama A."/>
            <person name="Ishikawa T."/>
            <person name="Jakt M."/>
            <person name="Kanapin A."/>
            <person name="Katoh M."/>
            <person name="Kawasawa Y."/>
            <person name="Kelso J."/>
            <person name="Kitamura H."/>
            <person name="Kitano H."/>
            <person name="Kollias G."/>
            <person name="Krishnan S.P."/>
            <person name="Kruger A."/>
            <person name="Kummerfeld S.K."/>
            <person name="Kurochkin I.V."/>
            <person name="Lareau L.F."/>
            <person name="Lazarevic D."/>
            <person name="Lipovich L."/>
            <person name="Liu J."/>
            <person name="Liuni S."/>
            <person name="McWilliam S."/>
            <person name="Madan Babu M."/>
            <person name="Madera M."/>
            <person name="Marchionni L."/>
            <person name="Matsuda H."/>
            <person name="Matsuzawa S."/>
            <person name="Miki H."/>
            <person name="Mignone F."/>
            <person name="Miyake S."/>
            <person name="Morris K."/>
            <person name="Mottagui-Tabar S."/>
            <person name="Mulder N."/>
            <person name="Nakano N."/>
            <person name="Nakauchi H."/>
            <person name="Ng P."/>
            <person name="Nilsson R."/>
            <person name="Nishiguchi S."/>
            <person name="Nishikawa S."/>
            <person name="Nori F."/>
            <person name="Ohara O."/>
            <person name="Okazaki Y."/>
            <person name="Orlando V."/>
            <person name="Pang K.C."/>
            <person name="Pavan W.J."/>
            <person name="Pavesi G."/>
            <person name="Pesole G."/>
            <person name="Petrovsky N."/>
            <person name="Piazza S."/>
            <person name="Reed J."/>
            <person name="Reid J.F."/>
            <person name="Ring B.Z."/>
            <person name="Ringwald M."/>
            <person name="Rost B."/>
            <person name="Ruan Y."/>
            <person name="Salzberg S.L."/>
            <person name="Sandelin A."/>
            <person name="Schneider C."/>
            <person name="Schoenbach C."/>
            <person name="Sekiguchi K."/>
            <person name="Semple C.A."/>
            <person name="Seno S."/>
            <person name="Sessa L."/>
            <person name="Sheng Y."/>
            <person name="Shibata Y."/>
            <person name="Shimada H."/>
            <person name="Shimada K."/>
            <person name="Silva D."/>
            <person name="Sinclair B."/>
            <person name="Sperling S."/>
            <person name="Stupka E."/>
            <person name="Sugiura K."/>
            <person name="Sultana R."/>
            <person name="Takenaka Y."/>
            <person name="Taki K."/>
            <person name="Tammoja K."/>
            <person name="Tan S.L."/>
            <person name="Tang S."/>
            <person name="Taylor M.S."/>
            <person name="Tegner J."/>
            <person name="Teichmann S.A."/>
            <person name="Ueda H.R."/>
            <person name="van Nimwegen E."/>
            <person name="Verardo R."/>
            <person name="Wei C.L."/>
            <person name="Yagi K."/>
            <person name="Yamanishi H."/>
            <person name="Zabarovsky E."/>
            <person name="Zhu S."/>
            <person name="Zimmer A."/>
            <person name="Hide W."/>
            <person name="Bult C."/>
            <person name="Grimmond S.M."/>
            <person name="Teasdale R.D."/>
            <person name="Liu E.T."/>
            <person name="Brusic V."/>
            <person name="Quackenbush J."/>
            <person name="Wahlestedt C."/>
            <person name="Mattick J.S."/>
            <person name="Hume D.A."/>
            <person name="Kai C."/>
            <person name="Sasaki D."/>
            <person name="Tomaru Y."/>
            <person name="Fukuda S."/>
            <person name="Kanamori-Katayama M."/>
            <person name="Suzuki M."/>
            <person name="Aoki J."/>
            <person name="Arakawa T."/>
            <person name="Iida J."/>
            <person name="Imamura K."/>
            <person name="Itoh M."/>
            <person name="Kato T."/>
            <person name="Kawaji H."/>
            <person name="Kawagashira N."/>
            <person name="Kawashima T."/>
            <person name="Kojima M."/>
            <person name="Kondo S."/>
            <person name="Konno H."/>
            <person name="Nakano K."/>
            <person name="Ninomiya N."/>
            <person name="Nishio T."/>
            <person name="Okada M."/>
            <person name="Plessy C."/>
            <person name="Shibata K."/>
            <person name="Shiraki T."/>
            <person name="Suzuki S."/>
            <person name="Tagami M."/>
            <person name="Waki K."/>
            <person name="Watahiki A."/>
            <person name="Okamura-Oho Y."/>
            <person name="Suzuki H."/>
            <person name="Kawai J."/>
            <person name="Hayashizaki Y."/>
        </authorList>
    </citation>
    <scope>NUCLEOTIDE SEQUENCE [LARGE SCALE MRNA] (ISOFORM 2)</scope>
    <source>
        <strain>C57BL/6J</strain>
        <tissue>Spinal ganglion</tissue>
        <tissue>Testis</tissue>
    </source>
</reference>
<reference key="2">
    <citation type="journal article" date="2009" name="PLoS Biol.">
        <title>Lineage-specific biology revealed by a finished genome assembly of the mouse.</title>
        <authorList>
            <person name="Church D.M."/>
            <person name="Goodstadt L."/>
            <person name="Hillier L.W."/>
            <person name="Zody M.C."/>
            <person name="Goldstein S."/>
            <person name="She X."/>
            <person name="Bult C.J."/>
            <person name="Agarwala R."/>
            <person name="Cherry J.L."/>
            <person name="DiCuccio M."/>
            <person name="Hlavina W."/>
            <person name="Kapustin Y."/>
            <person name="Meric P."/>
            <person name="Maglott D."/>
            <person name="Birtle Z."/>
            <person name="Marques A.C."/>
            <person name="Graves T."/>
            <person name="Zhou S."/>
            <person name="Teague B."/>
            <person name="Potamousis K."/>
            <person name="Churas C."/>
            <person name="Place M."/>
            <person name="Herschleb J."/>
            <person name="Runnheim R."/>
            <person name="Forrest D."/>
            <person name="Amos-Landgraf J."/>
            <person name="Schwartz D.C."/>
            <person name="Cheng Z."/>
            <person name="Lindblad-Toh K."/>
            <person name="Eichler E.E."/>
            <person name="Ponting C.P."/>
        </authorList>
    </citation>
    <scope>NUCLEOTIDE SEQUENCE [LARGE SCALE GENOMIC DNA]</scope>
    <source>
        <strain>C57BL/6J</strain>
    </source>
</reference>
<reference key="3">
    <citation type="journal article" date="2004" name="Genome Res.">
        <title>The status, quality, and expansion of the NIH full-length cDNA project: the Mammalian Gene Collection (MGC).</title>
        <authorList>
            <consortium name="The MGC Project Team"/>
        </authorList>
    </citation>
    <scope>NUCLEOTIDE SEQUENCE [LARGE SCALE MRNA] (ISOFORM 1)</scope>
    <source>
        <strain>C57BL/6J</strain>
        <tissue>Brain</tissue>
    </source>
</reference>
<reference key="4">
    <citation type="journal article" date="2010" name="Cell">
        <title>A tissue-specific atlas of mouse protein phosphorylation and expression.</title>
        <authorList>
            <person name="Huttlin E.L."/>
            <person name="Jedrychowski M.P."/>
            <person name="Elias J.E."/>
            <person name="Goswami T."/>
            <person name="Rad R."/>
            <person name="Beausoleil S.A."/>
            <person name="Villen J."/>
            <person name="Haas W."/>
            <person name="Sowa M.E."/>
            <person name="Gygi S.P."/>
        </authorList>
    </citation>
    <scope>IDENTIFICATION BY MASS SPECTROMETRY [LARGE SCALE ANALYSIS]</scope>
    <source>
        <tissue>Testis</tissue>
    </source>
</reference>
<reference key="5">
    <citation type="journal article" date="2011" name="Am. J. Hum. Genet.">
        <title>Human and mouse mutations in WDR35 cause short-rib polydactyly syndromes due to abnormal ciliogenesis.</title>
        <authorList>
            <person name="Mill P."/>
            <person name="Lockhart P.J."/>
            <person name="Fitzpatrick E."/>
            <person name="Mountford H.S."/>
            <person name="Hall E.A."/>
            <person name="Reijns M.A."/>
            <person name="Keighren M."/>
            <person name="Bahlo M."/>
            <person name="Bromhead C.J."/>
            <person name="Budd P."/>
            <person name="Aftimos S."/>
            <person name="Delatycki M.B."/>
            <person name="Savarirayan R."/>
            <person name="Jackson I.J."/>
            <person name="Amor D.J."/>
        </authorList>
    </citation>
    <scope>FUNCTION</scope>
    <scope>SUBCELLULAR LOCATION</scope>
</reference>
<reference key="6">
    <citation type="journal article" date="2021" name="Development">
        <title>CFAP61 is required for sperm flagellum formation and male fertility in human and mouse.</title>
        <authorList>
            <person name="Liu S."/>
            <person name="Zhang J."/>
            <person name="Kherraf Z.E."/>
            <person name="Sun S."/>
            <person name="Zhang X."/>
            <person name="Cazin C."/>
            <person name="Coutton C."/>
            <person name="Zouari R."/>
            <person name="Zhao S."/>
            <person name="Hu F."/>
            <person name="Fourati Ben Mustapha S."/>
            <person name="Arnoult C."/>
            <person name="Ray P.F."/>
            <person name="Liu M."/>
        </authorList>
    </citation>
    <scope>INTERACTION WITH CFAP61</scope>
</reference>
<keyword id="KW-0025">Alternative splicing</keyword>
<keyword id="KW-0966">Cell projection</keyword>
<keyword id="KW-0969">Cilium</keyword>
<keyword id="KW-0970">Cilium biogenesis/degradation</keyword>
<keyword id="KW-0963">Cytoplasm</keyword>
<keyword id="KW-0206">Cytoskeleton</keyword>
<keyword id="KW-1185">Reference proteome</keyword>
<keyword id="KW-0677">Repeat</keyword>
<keyword id="KW-0853">WD repeat</keyword>
<name>WDR35_MOUSE</name>
<evidence type="ECO:0000250" key="1">
    <source>
        <dbReference type="UniProtKB" id="Q9P2L0"/>
    </source>
</evidence>
<evidence type="ECO:0000269" key="2">
    <source>
    </source>
</evidence>
<evidence type="ECO:0000269" key="3">
    <source>
    </source>
</evidence>
<evidence type="ECO:0000303" key="4">
    <source>
    </source>
</evidence>
<evidence type="ECO:0000305" key="5"/>
<evidence type="ECO:0000312" key="6">
    <source>
        <dbReference type="MGI" id="MGI:1921932"/>
    </source>
</evidence>